<gene>
    <name type="primary">Dgkg</name>
    <name type="synonym">Dagk3</name>
</gene>
<protein>
    <recommendedName>
        <fullName>Diacylglycerol kinase gamma</fullName>
        <shortName>DAG kinase gamma</shortName>
        <ecNumber evidence="7">2.7.1.107</ecNumber>
    </recommendedName>
    <alternativeName>
        <fullName>88 kDa diacylglycerol kinase</fullName>
    </alternativeName>
    <alternativeName>
        <fullName evidence="8">DGK-III</fullName>
    </alternativeName>
    <alternativeName>
        <fullName>Diglyceride kinase gamma</fullName>
        <shortName>DGK-gamma</shortName>
    </alternativeName>
</protein>
<name>DGKG_RAT</name>
<proteinExistence type="evidence at protein level"/>
<reference key="1">
    <citation type="journal article" date="1994" name="Proc. Natl. Acad. Sci. U.S.A.">
        <title>Cloning and expression of a cytoskeleton-associated diacylglycerol kinase that is dominantly expressed in cerebellum.</title>
        <authorList>
            <person name="Goto K."/>
            <person name="Funayama M."/>
            <person name="Kondo H."/>
        </authorList>
    </citation>
    <scope>NUCLEOTIDE SEQUENCE [MRNA]</scope>
    <scope>FUNCTION</scope>
    <scope>CATALYTIC ACTIVITY</scope>
    <scope>ACTIVITY REGULATION</scope>
    <scope>PATHWAY</scope>
    <scope>SUBCELLULAR LOCATION</scope>
    <scope>TISSUE SPECIFICITY</scope>
    <source>
        <strain>Wistar</strain>
    </source>
</reference>
<evidence type="ECO:0000250" key="1">
    <source>
        <dbReference type="UniProtKB" id="P49619"/>
    </source>
</evidence>
<evidence type="ECO:0000250" key="2">
    <source>
        <dbReference type="UniProtKB" id="Q91WG7"/>
    </source>
</evidence>
<evidence type="ECO:0000255" key="3">
    <source>
        <dbReference type="PROSITE-ProRule" id="PRU00226"/>
    </source>
</evidence>
<evidence type="ECO:0000255" key="4">
    <source>
        <dbReference type="PROSITE-ProRule" id="PRU00448"/>
    </source>
</evidence>
<evidence type="ECO:0000255" key="5">
    <source>
        <dbReference type="PROSITE-ProRule" id="PRU00783"/>
    </source>
</evidence>
<evidence type="ECO:0000256" key="6">
    <source>
        <dbReference type="SAM" id="MobiDB-lite"/>
    </source>
</evidence>
<evidence type="ECO:0000269" key="7">
    <source>
    </source>
</evidence>
<evidence type="ECO:0000303" key="8">
    <source>
    </source>
</evidence>
<evidence type="ECO:0000305" key="9"/>
<evidence type="ECO:0000305" key="10">
    <source>
    </source>
</evidence>
<comment type="function">
    <text evidence="1 2 7">Diacylglycerol kinase that converts diacylglycerol/DAG into phosphatidic acid/phosphatidate/PA and regulates the respective levels of these two bioactive lipids (PubMed:7809169). Thereby, acts as a central switch between the signaling pathways activated by these second messengers with different cellular targets and opposite effects in numerous biological processes (By similarity). Has no apparent specificity with regard to the acyl compositions of diacylglycerol (By similarity). Specifically expressed in the cerebellum where it controls the level of diacylglycerol which in turn regulates the activity of protein kinase C gamma. Through protein kinase C gamma, indirectly regulates the dendritic development of Purkinje cells, cerebellar long term depression and ultimately cerebellar motor coordination (By similarity).</text>
</comment>
<comment type="catalytic activity">
    <reaction evidence="7">
        <text>a 1,2-diacyl-sn-glycerol + ATP = a 1,2-diacyl-sn-glycero-3-phosphate + ADP + H(+)</text>
        <dbReference type="Rhea" id="RHEA:10272"/>
        <dbReference type="ChEBI" id="CHEBI:15378"/>
        <dbReference type="ChEBI" id="CHEBI:17815"/>
        <dbReference type="ChEBI" id="CHEBI:30616"/>
        <dbReference type="ChEBI" id="CHEBI:58608"/>
        <dbReference type="ChEBI" id="CHEBI:456216"/>
        <dbReference type="EC" id="2.7.1.107"/>
    </reaction>
    <physiologicalReaction direction="left-to-right" evidence="10">
        <dbReference type="Rhea" id="RHEA:10273"/>
    </physiologicalReaction>
</comment>
<comment type="catalytic activity">
    <reaction evidence="7">
        <text>1,2-didecanoyl-sn-glycerol + ATP = 1,2-didecanoyl-sn-glycero-3-phosphate + ADP + H(+)</text>
        <dbReference type="Rhea" id="RHEA:43428"/>
        <dbReference type="ChEBI" id="CHEBI:15378"/>
        <dbReference type="ChEBI" id="CHEBI:18155"/>
        <dbReference type="ChEBI" id="CHEBI:30616"/>
        <dbReference type="ChEBI" id="CHEBI:78227"/>
        <dbReference type="ChEBI" id="CHEBI:456216"/>
    </reaction>
    <physiologicalReaction direction="left-to-right" evidence="10">
        <dbReference type="Rhea" id="RHEA:43429"/>
    </physiologicalReaction>
</comment>
<comment type="catalytic activity">
    <reaction evidence="7">
        <text>1,2-di-(9Z-octadecenoyl)-sn-glycerol + ATP = 1,2-di-(9Z-octadecenoyl)-sn-glycero-3-phosphate + ADP + H(+)</text>
        <dbReference type="Rhea" id="RHEA:40327"/>
        <dbReference type="ChEBI" id="CHEBI:15378"/>
        <dbReference type="ChEBI" id="CHEBI:30616"/>
        <dbReference type="ChEBI" id="CHEBI:52333"/>
        <dbReference type="ChEBI" id="CHEBI:74546"/>
        <dbReference type="ChEBI" id="CHEBI:456216"/>
    </reaction>
    <physiologicalReaction direction="left-to-right" evidence="10">
        <dbReference type="Rhea" id="RHEA:40328"/>
    </physiologicalReaction>
</comment>
<comment type="catalytic activity">
    <reaction evidence="7">
        <text>1-octadecanoyl-2-(9Z,12Z)-octadecadienoyl-sn-glycerol + ATP = 1-octadecanoyl-2-(9Z,12Z-octadecadienoyl)-sn-glycero-3-phosphate + ADP + H(+)</text>
        <dbReference type="Rhea" id="RHEA:40339"/>
        <dbReference type="ChEBI" id="CHEBI:15378"/>
        <dbReference type="ChEBI" id="CHEBI:30616"/>
        <dbReference type="ChEBI" id="CHEBI:77097"/>
        <dbReference type="ChEBI" id="CHEBI:77098"/>
        <dbReference type="ChEBI" id="CHEBI:456216"/>
    </reaction>
    <physiologicalReaction direction="left-to-right" evidence="10">
        <dbReference type="Rhea" id="RHEA:40340"/>
    </physiologicalReaction>
</comment>
<comment type="catalytic activity">
    <reaction evidence="7">
        <text>1-octadecanoyl-2-(5Z,8Z,11Z,14Z-eicosatetraenoyl)-sn-glycerol + ATP = 1-octadecanoyl-2-(5Z,8Z,11Z,14Z-eicosatetraenoyl)-sn-glycero-3-phosphate + ADP + H(+)</text>
        <dbReference type="Rhea" id="RHEA:40323"/>
        <dbReference type="ChEBI" id="CHEBI:15378"/>
        <dbReference type="ChEBI" id="CHEBI:30616"/>
        <dbReference type="ChEBI" id="CHEBI:75728"/>
        <dbReference type="ChEBI" id="CHEBI:77091"/>
        <dbReference type="ChEBI" id="CHEBI:456216"/>
    </reaction>
    <physiologicalReaction direction="left-to-right" evidence="10">
        <dbReference type="Rhea" id="RHEA:40324"/>
    </physiologicalReaction>
</comment>
<comment type="activity regulation">
    <text evidence="1 7">The activity is calcium-dependent (PubMed:7809169). Requires phosphatidylserine for maximal activity (By similarity).</text>
</comment>
<comment type="pathway">
    <text evidence="10">Lipid metabolism; glycerolipid metabolism.</text>
</comment>
<comment type="subcellular location">
    <subcellularLocation>
        <location evidence="7">Membrane</location>
    </subcellularLocation>
    <subcellularLocation>
        <location evidence="1">Cytoplasm</location>
        <location evidence="1">Cytosol</location>
    </subcellularLocation>
    <subcellularLocation>
        <location evidence="10">Cytoplasm</location>
        <location evidence="10">Cytoskeleton</location>
    </subcellularLocation>
</comment>
<comment type="tissue specificity">
    <text evidence="7">Expressed specifically in brain (PubMed:7809169). Highly expressed in cerebellar Purkinje cells (at protein level) (PubMed:7809169).</text>
</comment>
<comment type="similarity">
    <text evidence="9">Belongs to the eukaryotic diacylglycerol kinase family.</text>
</comment>
<organism>
    <name type="scientific">Rattus norvegicus</name>
    <name type="common">Rat</name>
    <dbReference type="NCBI Taxonomy" id="10116"/>
    <lineage>
        <taxon>Eukaryota</taxon>
        <taxon>Metazoa</taxon>
        <taxon>Chordata</taxon>
        <taxon>Craniata</taxon>
        <taxon>Vertebrata</taxon>
        <taxon>Euteleostomi</taxon>
        <taxon>Mammalia</taxon>
        <taxon>Eutheria</taxon>
        <taxon>Euarchontoglires</taxon>
        <taxon>Glires</taxon>
        <taxon>Rodentia</taxon>
        <taxon>Myomorpha</taxon>
        <taxon>Muroidea</taxon>
        <taxon>Muridae</taxon>
        <taxon>Murinae</taxon>
        <taxon>Rattus</taxon>
    </lineage>
</organism>
<accession>P49620</accession>
<dbReference type="EC" id="2.7.1.107" evidence="7"/>
<dbReference type="EMBL" id="D38448">
    <property type="protein sequence ID" value="BAA07480.1"/>
    <property type="molecule type" value="mRNA"/>
</dbReference>
<dbReference type="RefSeq" id="NP_037258.1">
    <property type="nucleotide sequence ID" value="NM_013126.2"/>
</dbReference>
<dbReference type="BioGRID" id="247695">
    <property type="interactions" value="2"/>
</dbReference>
<dbReference type="FunCoup" id="P49620">
    <property type="interactions" value="1122"/>
</dbReference>
<dbReference type="STRING" id="10116.ENSRNOP00000002452"/>
<dbReference type="GlyGen" id="P49620">
    <property type="glycosylation" value="1 site"/>
</dbReference>
<dbReference type="iPTMnet" id="P49620"/>
<dbReference type="PhosphoSitePlus" id="P49620"/>
<dbReference type="PaxDb" id="10116-ENSRNOP00000002452"/>
<dbReference type="Ensembl" id="ENSRNOT00000002452.6">
    <property type="protein sequence ID" value="ENSRNOP00000002452.5"/>
    <property type="gene ID" value="ENSRNOG00000001796.7"/>
</dbReference>
<dbReference type="GeneID" id="25666"/>
<dbReference type="KEGG" id="rno:25666"/>
<dbReference type="UCSC" id="RGD:2499">
    <property type="organism name" value="rat"/>
</dbReference>
<dbReference type="AGR" id="RGD:2499"/>
<dbReference type="CTD" id="1608"/>
<dbReference type="RGD" id="2499">
    <property type="gene designation" value="Dgkg"/>
</dbReference>
<dbReference type="eggNOG" id="KOG1169">
    <property type="taxonomic scope" value="Eukaryota"/>
</dbReference>
<dbReference type="GeneTree" id="ENSGT00940000156768"/>
<dbReference type="HOGENOM" id="CLU_003770_1_0_1"/>
<dbReference type="InParanoid" id="P49620"/>
<dbReference type="OMA" id="GPDTNIQ"/>
<dbReference type="OrthoDB" id="242257at2759"/>
<dbReference type="PhylomeDB" id="P49620"/>
<dbReference type="TreeFam" id="TF313104"/>
<dbReference type="Reactome" id="R-RNO-114508">
    <property type="pathway name" value="Effects of PIP2 hydrolysis"/>
</dbReference>
<dbReference type="UniPathway" id="UPA00230"/>
<dbReference type="PRO" id="PR:P49620"/>
<dbReference type="Proteomes" id="UP000002494">
    <property type="component" value="Chromosome 11"/>
</dbReference>
<dbReference type="Bgee" id="ENSRNOG00000001796">
    <property type="expression patterns" value="Expressed in adult mammalian kidney and 16 other cell types or tissues"/>
</dbReference>
<dbReference type="GO" id="GO:0005856">
    <property type="term" value="C:cytoskeleton"/>
    <property type="evidence" value="ECO:0007669"/>
    <property type="project" value="UniProtKB-SubCell"/>
</dbReference>
<dbReference type="GO" id="GO:0005829">
    <property type="term" value="C:cytosol"/>
    <property type="evidence" value="ECO:0000250"/>
    <property type="project" value="UniProtKB"/>
</dbReference>
<dbReference type="GO" id="GO:0016020">
    <property type="term" value="C:membrane"/>
    <property type="evidence" value="ECO:0000314"/>
    <property type="project" value="UniProtKB"/>
</dbReference>
<dbReference type="GO" id="GO:0005886">
    <property type="term" value="C:plasma membrane"/>
    <property type="evidence" value="ECO:0000318"/>
    <property type="project" value="GO_Central"/>
</dbReference>
<dbReference type="GO" id="GO:0005524">
    <property type="term" value="F:ATP binding"/>
    <property type="evidence" value="ECO:0007669"/>
    <property type="project" value="UniProtKB-KW"/>
</dbReference>
<dbReference type="GO" id="GO:0004143">
    <property type="term" value="F:ATP-dependent diacylglycerol kinase activity"/>
    <property type="evidence" value="ECO:0000314"/>
    <property type="project" value="RGD"/>
</dbReference>
<dbReference type="GO" id="GO:0005509">
    <property type="term" value="F:calcium ion binding"/>
    <property type="evidence" value="ECO:0007669"/>
    <property type="project" value="InterPro"/>
</dbReference>
<dbReference type="GO" id="GO:0008289">
    <property type="term" value="F:lipid binding"/>
    <property type="evidence" value="ECO:0000266"/>
    <property type="project" value="RGD"/>
</dbReference>
<dbReference type="GO" id="GO:0008270">
    <property type="term" value="F:zinc ion binding"/>
    <property type="evidence" value="ECO:0007669"/>
    <property type="project" value="UniProtKB-KW"/>
</dbReference>
<dbReference type="GO" id="GO:0046339">
    <property type="term" value="P:diacylglycerol metabolic process"/>
    <property type="evidence" value="ECO:0000250"/>
    <property type="project" value="UniProtKB"/>
</dbReference>
<dbReference type="GO" id="GO:0046486">
    <property type="term" value="P:glycerolipid metabolic process"/>
    <property type="evidence" value="ECO:0000266"/>
    <property type="project" value="RGD"/>
</dbReference>
<dbReference type="GO" id="GO:0035556">
    <property type="term" value="P:intracellular signal transduction"/>
    <property type="evidence" value="ECO:0000318"/>
    <property type="project" value="GO_Central"/>
</dbReference>
<dbReference type="GO" id="GO:0046834">
    <property type="term" value="P:lipid phosphorylation"/>
    <property type="evidence" value="ECO:0000250"/>
    <property type="project" value="UniProtKB"/>
</dbReference>
<dbReference type="GO" id="GO:0160195">
    <property type="term" value="P:negative regulation of phospholipase C/protein kinase C signal transduction"/>
    <property type="evidence" value="ECO:0000250"/>
    <property type="project" value="UniProtKB"/>
</dbReference>
<dbReference type="GO" id="GO:0048666">
    <property type="term" value="P:neuron development"/>
    <property type="evidence" value="ECO:0000270"/>
    <property type="project" value="RGD"/>
</dbReference>
<dbReference type="GO" id="GO:0006654">
    <property type="term" value="P:phosphatidic acid biosynthetic process"/>
    <property type="evidence" value="ECO:0000250"/>
    <property type="project" value="UniProtKB"/>
</dbReference>
<dbReference type="GO" id="GO:0007200">
    <property type="term" value="P:phospholipase C-activating G protein-coupled receptor signaling pathway"/>
    <property type="evidence" value="ECO:0000304"/>
    <property type="project" value="RGD"/>
</dbReference>
<dbReference type="GO" id="GO:0050773">
    <property type="term" value="P:regulation of dendrite development"/>
    <property type="evidence" value="ECO:0000266"/>
    <property type="project" value="RGD"/>
</dbReference>
<dbReference type="CDD" id="cd20892">
    <property type="entry name" value="C1_DGKgamma_rpt2"/>
    <property type="match status" value="1"/>
</dbReference>
<dbReference type="CDD" id="cd00051">
    <property type="entry name" value="EFh"/>
    <property type="match status" value="1"/>
</dbReference>
<dbReference type="FunFam" id="1.10.238.10:FF:000017">
    <property type="entry name" value="Diacylglycerol kinase"/>
    <property type="match status" value="1"/>
</dbReference>
<dbReference type="FunFam" id="1.10.238.110:FF:000002">
    <property type="entry name" value="Diacylglycerol kinase"/>
    <property type="match status" value="1"/>
</dbReference>
<dbReference type="FunFam" id="2.60.200.40:FF:000003">
    <property type="entry name" value="Diacylglycerol kinase"/>
    <property type="match status" value="1"/>
</dbReference>
<dbReference type="FunFam" id="3.30.60.20:FF:000043">
    <property type="entry name" value="Diacylglycerol kinase"/>
    <property type="match status" value="1"/>
</dbReference>
<dbReference type="FunFam" id="3.30.60.20:FF:000066">
    <property type="entry name" value="Diacylglycerol kinase"/>
    <property type="match status" value="1"/>
</dbReference>
<dbReference type="FunFam" id="3.40.50.10330:FF:000003">
    <property type="entry name" value="Diacylglycerol kinase"/>
    <property type="match status" value="1"/>
</dbReference>
<dbReference type="Gene3D" id="2.60.200.40">
    <property type="match status" value="1"/>
</dbReference>
<dbReference type="Gene3D" id="3.30.60.20">
    <property type="match status" value="2"/>
</dbReference>
<dbReference type="Gene3D" id="1.10.238.110">
    <property type="entry name" value="Diacylglycerol kinase alpha"/>
    <property type="match status" value="2"/>
</dbReference>
<dbReference type="Gene3D" id="1.10.238.10">
    <property type="entry name" value="EF-hand"/>
    <property type="match status" value="1"/>
</dbReference>
<dbReference type="Gene3D" id="3.40.50.10330">
    <property type="entry name" value="Probable inorganic polyphosphate/atp-NAD kinase, domain 1"/>
    <property type="match status" value="1"/>
</dbReference>
<dbReference type="InterPro" id="IPR017438">
    <property type="entry name" value="ATP-NAD_kinase_N"/>
</dbReference>
<dbReference type="InterPro" id="IPR046349">
    <property type="entry name" value="C1-like_sf"/>
</dbReference>
<dbReference type="InterPro" id="IPR047475">
    <property type="entry name" value="C1_DGKgamma_rpt2"/>
</dbReference>
<dbReference type="InterPro" id="IPR029477">
    <property type="entry name" value="DAG_kinase_typeI_N"/>
</dbReference>
<dbReference type="InterPro" id="IPR037607">
    <property type="entry name" value="DGK"/>
</dbReference>
<dbReference type="InterPro" id="IPR038199">
    <property type="entry name" value="DGK_typeI_N_sf"/>
</dbReference>
<dbReference type="InterPro" id="IPR000756">
    <property type="entry name" value="Diacylglycerol_kin_accessory"/>
</dbReference>
<dbReference type="InterPro" id="IPR001206">
    <property type="entry name" value="Diacylglycerol_kinase_cat_dom"/>
</dbReference>
<dbReference type="InterPro" id="IPR011992">
    <property type="entry name" value="EF-hand-dom_pair"/>
</dbReference>
<dbReference type="InterPro" id="IPR018247">
    <property type="entry name" value="EF_Hand_1_Ca_BS"/>
</dbReference>
<dbReference type="InterPro" id="IPR002048">
    <property type="entry name" value="EF_hand_dom"/>
</dbReference>
<dbReference type="InterPro" id="IPR016064">
    <property type="entry name" value="NAD/diacylglycerol_kinase_sf"/>
</dbReference>
<dbReference type="InterPro" id="IPR002219">
    <property type="entry name" value="PE/DAG-bd"/>
</dbReference>
<dbReference type="PANTHER" id="PTHR11255">
    <property type="entry name" value="DIACYLGLYCEROL KINASE"/>
    <property type="match status" value="1"/>
</dbReference>
<dbReference type="PANTHER" id="PTHR11255:SF36">
    <property type="entry name" value="DIACYLGLYCEROL KINASE GAMMA"/>
    <property type="match status" value="1"/>
</dbReference>
<dbReference type="Pfam" id="PF00130">
    <property type="entry name" value="C1_1"/>
    <property type="match status" value="1"/>
</dbReference>
<dbReference type="Pfam" id="PF14513">
    <property type="entry name" value="DAG_kinase_N"/>
    <property type="match status" value="1"/>
</dbReference>
<dbReference type="Pfam" id="PF00609">
    <property type="entry name" value="DAGK_acc"/>
    <property type="match status" value="1"/>
</dbReference>
<dbReference type="Pfam" id="PF00781">
    <property type="entry name" value="DAGK_cat"/>
    <property type="match status" value="1"/>
</dbReference>
<dbReference type="SMART" id="SM00109">
    <property type="entry name" value="C1"/>
    <property type="match status" value="2"/>
</dbReference>
<dbReference type="SMART" id="SM00045">
    <property type="entry name" value="DAGKa"/>
    <property type="match status" value="1"/>
</dbReference>
<dbReference type="SMART" id="SM00046">
    <property type="entry name" value="DAGKc"/>
    <property type="match status" value="1"/>
</dbReference>
<dbReference type="SMART" id="SM00054">
    <property type="entry name" value="EFh"/>
    <property type="match status" value="2"/>
</dbReference>
<dbReference type="SUPFAM" id="SSF57889">
    <property type="entry name" value="Cysteine-rich domain"/>
    <property type="match status" value="2"/>
</dbReference>
<dbReference type="SUPFAM" id="SSF47473">
    <property type="entry name" value="EF-hand"/>
    <property type="match status" value="2"/>
</dbReference>
<dbReference type="SUPFAM" id="SSF111331">
    <property type="entry name" value="NAD kinase/diacylglycerol kinase-like"/>
    <property type="match status" value="1"/>
</dbReference>
<dbReference type="PROSITE" id="PS50146">
    <property type="entry name" value="DAGK"/>
    <property type="match status" value="1"/>
</dbReference>
<dbReference type="PROSITE" id="PS00018">
    <property type="entry name" value="EF_HAND_1"/>
    <property type="match status" value="1"/>
</dbReference>
<dbReference type="PROSITE" id="PS50222">
    <property type="entry name" value="EF_HAND_2"/>
    <property type="match status" value="2"/>
</dbReference>
<dbReference type="PROSITE" id="PS00479">
    <property type="entry name" value="ZF_DAG_PE_1"/>
    <property type="match status" value="2"/>
</dbReference>
<dbReference type="PROSITE" id="PS50081">
    <property type="entry name" value="ZF_DAG_PE_2"/>
    <property type="match status" value="2"/>
</dbReference>
<keyword id="KW-0067">ATP-binding</keyword>
<keyword id="KW-0106">Calcium</keyword>
<keyword id="KW-0963">Cytoplasm</keyword>
<keyword id="KW-0206">Cytoskeleton</keyword>
<keyword id="KW-0418">Kinase</keyword>
<keyword id="KW-0443">Lipid metabolism</keyword>
<keyword id="KW-0472">Membrane</keyword>
<keyword id="KW-0479">Metal-binding</keyword>
<keyword id="KW-0547">Nucleotide-binding</keyword>
<keyword id="KW-1185">Reference proteome</keyword>
<keyword id="KW-0677">Repeat</keyword>
<keyword id="KW-0808">Transferase</keyword>
<keyword id="KW-0862">Zinc</keyword>
<keyword id="KW-0863">Zinc-finger</keyword>
<feature type="chain" id="PRO_0000218461" description="Diacylglycerol kinase gamma">
    <location>
        <begin position="1"/>
        <end position="788"/>
    </location>
</feature>
<feature type="domain" description="EF-hand 1" evidence="4">
    <location>
        <begin position="172"/>
        <end position="207"/>
    </location>
</feature>
<feature type="domain" description="EF-hand 2" evidence="4">
    <location>
        <begin position="217"/>
        <end position="252"/>
    </location>
</feature>
<feature type="domain" description="DAGKc" evidence="5">
    <location>
        <begin position="427"/>
        <end position="561"/>
    </location>
</feature>
<feature type="zinc finger region" description="Phorbol-ester/DAG-type 1" evidence="3">
    <location>
        <begin position="268"/>
        <end position="318"/>
    </location>
</feature>
<feature type="zinc finger region" description="Phorbol-ester/DAG-type 2" evidence="3">
    <location>
        <begin position="333"/>
        <end position="380"/>
    </location>
</feature>
<feature type="region of interest" description="Disordered" evidence="6">
    <location>
        <begin position="83"/>
        <end position="150"/>
    </location>
</feature>
<feature type="region of interest" description="Disordered" evidence="6">
    <location>
        <begin position="768"/>
        <end position="788"/>
    </location>
</feature>
<feature type="compositionally biased region" description="Basic and acidic residues" evidence="6">
    <location>
        <begin position="83"/>
        <end position="93"/>
    </location>
</feature>
<feature type="compositionally biased region" description="Polar residues" evidence="6">
    <location>
        <begin position="95"/>
        <end position="109"/>
    </location>
</feature>
<feature type="binding site" evidence="9">
    <location>
        <position position="185"/>
    </location>
    <ligand>
        <name>Ca(2+)</name>
        <dbReference type="ChEBI" id="CHEBI:29108"/>
        <label>1</label>
    </ligand>
</feature>
<feature type="binding site" evidence="9">
    <location>
        <position position="187"/>
    </location>
    <ligand>
        <name>Ca(2+)</name>
        <dbReference type="ChEBI" id="CHEBI:29108"/>
        <label>1</label>
    </ligand>
</feature>
<feature type="binding site" evidence="9">
    <location>
        <position position="189"/>
    </location>
    <ligand>
        <name>Ca(2+)</name>
        <dbReference type="ChEBI" id="CHEBI:29108"/>
        <label>1</label>
    </ligand>
</feature>
<feature type="binding site" evidence="9">
    <location>
        <position position="196"/>
    </location>
    <ligand>
        <name>Ca(2+)</name>
        <dbReference type="ChEBI" id="CHEBI:29108"/>
        <label>1</label>
    </ligand>
</feature>
<feature type="binding site" evidence="4">
    <location>
        <position position="230"/>
    </location>
    <ligand>
        <name>Ca(2+)</name>
        <dbReference type="ChEBI" id="CHEBI:29108"/>
        <label>2</label>
    </ligand>
</feature>
<feature type="binding site" evidence="4">
    <location>
        <position position="232"/>
    </location>
    <ligand>
        <name>Ca(2+)</name>
        <dbReference type="ChEBI" id="CHEBI:29108"/>
        <label>2</label>
    </ligand>
</feature>
<feature type="binding site" evidence="4">
    <location>
        <position position="234"/>
    </location>
    <ligand>
        <name>Ca(2+)</name>
        <dbReference type="ChEBI" id="CHEBI:29108"/>
        <label>2</label>
    </ligand>
</feature>
<feature type="binding site" evidence="4">
    <location>
        <position position="241"/>
    </location>
    <ligand>
        <name>Ca(2+)</name>
        <dbReference type="ChEBI" id="CHEBI:29108"/>
        <label>2</label>
    </ligand>
</feature>
<sequence length="788" mass="88521">MSDGQWVCLSSEEFDQLQKYSEYSSKKIKDVLAEFNEGGSLKQYDPHKPISYDVFKLFMRAYLEVDLPQPLSTNLFLAFSQKPRQETPDHPKEGASSSEPNVSDSNAESTAKADAACAPDTESKPIKTQVPSEELEAAAPWGEPNAPASSSDAPIVYLKDVVCYLSLMETGRPQDKLEFMFRLYDSDENELLDQAELDQIVSQMLHVAQYLEWDPTELRPILKEMLQGMDYNKDGFVSLEEWVSGGMTTIPLLVLLGMDDSASKGDGRHAWTLKHFKKPTYCNFCHIMLMGVRKQGLCCIYCKYAVHQRCVSNSIPGCVKTYSKAKRSGEVMQHAWVEGNSSVKCDRCHKSIKCYQSVTARHCVWCRMTFHRKCELSTACDGGELKDHILLPTSIYPVTRDRQAGKSDSGAAAKGELVMQYKIIPSPGTHPLLVLVNPKSGGRQGERILQKFHYLLNPKQVFNLDKGGPTPGLNFFQDTPDFRVLACGGDGTVGWILDCIDKANFTKHPPVAVLPLGTGNDLARCLRWGGGYEGGSLTKILKEIEQSPLVMLDRWYLEVMPREEVENGDQVPYNIMNNYFSIGVDASIAHRFHVMREKHPEKFNSRMKNKLWYFEFGTSETFAATCKKLHDHIELECDGVEVDLSNIFLEGIAILNIPSMYGGTNLWGETKKNRAVIRESRKSVTDPKELKCCVQDLSDQLLEVVGLEGAMEMGQIYTGLKSAGRRLAQCSSVTIRTKKLLPMQVDGEPWMQPPCMIKITHKNQAPMMMGPPQKSSFFSLRRKSRSKD</sequence>